<evidence type="ECO:0000255" key="1">
    <source>
        <dbReference type="HAMAP-Rule" id="MF_00418"/>
    </source>
</evidence>
<evidence type="ECO:0000305" key="2"/>
<accession>Q72U22</accession>
<gene>
    <name evidence="1" type="primary">dapA</name>
    <name type="ordered locus">LIC_10842</name>
</gene>
<feature type="chain" id="PRO_0000103121" description="4-hydroxy-tetrahydrodipicolinate synthase">
    <location>
        <begin position="1"/>
        <end position="307"/>
    </location>
</feature>
<feature type="active site" description="Proton donor/acceptor" evidence="1">
    <location>
        <position position="145"/>
    </location>
</feature>
<feature type="active site" description="Schiff-base intermediate with substrate" evidence="1">
    <location>
        <position position="173"/>
    </location>
</feature>
<feature type="binding site" evidence="1">
    <location>
        <position position="57"/>
    </location>
    <ligand>
        <name>pyruvate</name>
        <dbReference type="ChEBI" id="CHEBI:15361"/>
    </ligand>
</feature>
<feature type="binding site" evidence="1">
    <location>
        <position position="215"/>
    </location>
    <ligand>
        <name>pyruvate</name>
        <dbReference type="ChEBI" id="CHEBI:15361"/>
    </ligand>
</feature>
<feature type="site" description="Part of a proton relay during catalysis" evidence="1">
    <location>
        <position position="56"/>
    </location>
</feature>
<feature type="site" description="Part of a proton relay during catalysis" evidence="1">
    <location>
        <position position="119"/>
    </location>
</feature>
<comment type="function">
    <text evidence="1">Catalyzes the condensation of (S)-aspartate-beta-semialdehyde [(S)-ASA] and pyruvate to 4-hydroxy-tetrahydrodipicolinate (HTPA).</text>
</comment>
<comment type="catalytic activity">
    <reaction evidence="1">
        <text>L-aspartate 4-semialdehyde + pyruvate = (2S,4S)-4-hydroxy-2,3,4,5-tetrahydrodipicolinate + H2O + H(+)</text>
        <dbReference type="Rhea" id="RHEA:34171"/>
        <dbReference type="ChEBI" id="CHEBI:15361"/>
        <dbReference type="ChEBI" id="CHEBI:15377"/>
        <dbReference type="ChEBI" id="CHEBI:15378"/>
        <dbReference type="ChEBI" id="CHEBI:67139"/>
        <dbReference type="ChEBI" id="CHEBI:537519"/>
        <dbReference type="EC" id="4.3.3.7"/>
    </reaction>
</comment>
<comment type="pathway">
    <text evidence="1">Amino-acid biosynthesis; L-lysine biosynthesis via DAP pathway; (S)-tetrahydrodipicolinate from L-aspartate: step 3/4.</text>
</comment>
<comment type="subunit">
    <text evidence="1">Homotetramer; dimer of dimers.</text>
</comment>
<comment type="subcellular location">
    <subcellularLocation>
        <location evidence="1">Cytoplasm</location>
    </subcellularLocation>
</comment>
<comment type="similarity">
    <text evidence="1">Belongs to the DapA family.</text>
</comment>
<comment type="caution">
    <text evidence="2">Was originally thought to be a dihydrodipicolinate synthase (DHDPS), catalyzing the condensation of (S)-aspartate-beta-semialdehyde [(S)-ASA] and pyruvate to dihydrodipicolinate (DHDP). However, it was shown in E.coli that the product of the enzymatic reaction is not dihydrodipicolinate but in fact (4S)-4-hydroxy-2,3,4,5-tetrahydro-(2S)-dipicolinic acid (HTPA), and that the consecutive dehydration reaction leading to DHDP is not spontaneous but catalyzed by DapB.</text>
</comment>
<dbReference type="EC" id="4.3.3.7" evidence="1"/>
<dbReference type="EMBL" id="AE016823">
    <property type="protein sequence ID" value="AAS69456.1"/>
    <property type="molecule type" value="Genomic_DNA"/>
</dbReference>
<dbReference type="SMR" id="Q72U22"/>
<dbReference type="KEGG" id="lic:LIC_10842"/>
<dbReference type="HOGENOM" id="CLU_049343_7_1_12"/>
<dbReference type="UniPathway" id="UPA00034">
    <property type="reaction ID" value="UER00017"/>
</dbReference>
<dbReference type="Proteomes" id="UP000007037">
    <property type="component" value="Chromosome I"/>
</dbReference>
<dbReference type="GO" id="GO:0005829">
    <property type="term" value="C:cytosol"/>
    <property type="evidence" value="ECO:0007669"/>
    <property type="project" value="TreeGrafter"/>
</dbReference>
<dbReference type="GO" id="GO:0008840">
    <property type="term" value="F:4-hydroxy-tetrahydrodipicolinate synthase activity"/>
    <property type="evidence" value="ECO:0007669"/>
    <property type="project" value="UniProtKB-UniRule"/>
</dbReference>
<dbReference type="GO" id="GO:0019877">
    <property type="term" value="P:diaminopimelate biosynthetic process"/>
    <property type="evidence" value="ECO:0007669"/>
    <property type="project" value="UniProtKB-UniRule"/>
</dbReference>
<dbReference type="GO" id="GO:0009089">
    <property type="term" value="P:lysine biosynthetic process via diaminopimelate"/>
    <property type="evidence" value="ECO:0007669"/>
    <property type="project" value="UniProtKB-UniRule"/>
</dbReference>
<dbReference type="CDD" id="cd00950">
    <property type="entry name" value="DHDPS"/>
    <property type="match status" value="1"/>
</dbReference>
<dbReference type="Gene3D" id="3.20.20.70">
    <property type="entry name" value="Aldolase class I"/>
    <property type="match status" value="1"/>
</dbReference>
<dbReference type="HAMAP" id="MF_00418">
    <property type="entry name" value="DapA"/>
    <property type="match status" value="1"/>
</dbReference>
<dbReference type="InterPro" id="IPR013785">
    <property type="entry name" value="Aldolase_TIM"/>
</dbReference>
<dbReference type="InterPro" id="IPR005263">
    <property type="entry name" value="DapA"/>
</dbReference>
<dbReference type="InterPro" id="IPR002220">
    <property type="entry name" value="DapA-like"/>
</dbReference>
<dbReference type="InterPro" id="IPR020625">
    <property type="entry name" value="Schiff_base-form_aldolases_AS"/>
</dbReference>
<dbReference type="InterPro" id="IPR020624">
    <property type="entry name" value="Schiff_base-form_aldolases_CS"/>
</dbReference>
<dbReference type="NCBIfam" id="TIGR00674">
    <property type="entry name" value="dapA"/>
    <property type="match status" value="1"/>
</dbReference>
<dbReference type="PANTHER" id="PTHR12128:SF66">
    <property type="entry name" value="4-HYDROXY-2-OXOGLUTARATE ALDOLASE, MITOCHONDRIAL"/>
    <property type="match status" value="1"/>
</dbReference>
<dbReference type="PANTHER" id="PTHR12128">
    <property type="entry name" value="DIHYDRODIPICOLINATE SYNTHASE"/>
    <property type="match status" value="1"/>
</dbReference>
<dbReference type="Pfam" id="PF00701">
    <property type="entry name" value="DHDPS"/>
    <property type="match status" value="1"/>
</dbReference>
<dbReference type="PIRSF" id="PIRSF001365">
    <property type="entry name" value="DHDPS"/>
    <property type="match status" value="1"/>
</dbReference>
<dbReference type="PRINTS" id="PR00146">
    <property type="entry name" value="DHPICSNTHASE"/>
</dbReference>
<dbReference type="SMART" id="SM01130">
    <property type="entry name" value="DHDPS"/>
    <property type="match status" value="1"/>
</dbReference>
<dbReference type="SUPFAM" id="SSF51569">
    <property type="entry name" value="Aldolase"/>
    <property type="match status" value="1"/>
</dbReference>
<dbReference type="PROSITE" id="PS00665">
    <property type="entry name" value="DHDPS_1"/>
    <property type="match status" value="1"/>
</dbReference>
<dbReference type="PROSITE" id="PS00666">
    <property type="entry name" value="DHDPS_2"/>
    <property type="match status" value="1"/>
</dbReference>
<name>DAPA_LEPIC</name>
<proteinExistence type="inferred from homology"/>
<reference key="1">
    <citation type="journal article" date="2004" name="J. Bacteriol.">
        <title>Comparative genomics of two Leptospira interrogans serovars reveals novel insights into physiology and pathogenesis.</title>
        <authorList>
            <person name="Nascimento A.L.T.O."/>
            <person name="Ko A.I."/>
            <person name="Martins E.A.L."/>
            <person name="Monteiro-Vitorello C.B."/>
            <person name="Ho P.L."/>
            <person name="Haake D.A."/>
            <person name="Verjovski-Almeida S."/>
            <person name="Hartskeerl R.A."/>
            <person name="Marques M.V."/>
            <person name="Oliveira M.C."/>
            <person name="Menck C.F.M."/>
            <person name="Leite L.C.C."/>
            <person name="Carrer H."/>
            <person name="Coutinho L.L."/>
            <person name="Degrave W.M."/>
            <person name="Dellagostin O.A."/>
            <person name="El-Dorry H."/>
            <person name="Ferro E.S."/>
            <person name="Ferro M.I.T."/>
            <person name="Furlan L.R."/>
            <person name="Gamberini M."/>
            <person name="Giglioti E.A."/>
            <person name="Goes-Neto A."/>
            <person name="Goldman G.H."/>
            <person name="Goldman M.H.S."/>
            <person name="Harakava R."/>
            <person name="Jeronimo S.M.B."/>
            <person name="Junqueira-de-Azevedo I.L.M."/>
            <person name="Kimura E.T."/>
            <person name="Kuramae E.E."/>
            <person name="Lemos E.G.M."/>
            <person name="Lemos M.V.F."/>
            <person name="Marino C.L."/>
            <person name="Nunes L.R."/>
            <person name="de Oliveira R.C."/>
            <person name="Pereira G.G."/>
            <person name="Reis M.S."/>
            <person name="Schriefer A."/>
            <person name="Siqueira W.J."/>
            <person name="Sommer P."/>
            <person name="Tsai S.M."/>
            <person name="Simpson A.J.G."/>
            <person name="Ferro J.A."/>
            <person name="Camargo L.E.A."/>
            <person name="Kitajima J.P."/>
            <person name="Setubal J.C."/>
            <person name="Van Sluys M.A."/>
        </authorList>
    </citation>
    <scope>NUCLEOTIDE SEQUENCE [LARGE SCALE GENOMIC DNA]</scope>
    <source>
        <strain>Fiocruz L1-130</strain>
    </source>
</reference>
<organism>
    <name type="scientific">Leptospira interrogans serogroup Icterohaemorrhagiae serovar copenhageni (strain Fiocruz L1-130)</name>
    <dbReference type="NCBI Taxonomy" id="267671"/>
    <lineage>
        <taxon>Bacteria</taxon>
        <taxon>Pseudomonadati</taxon>
        <taxon>Spirochaetota</taxon>
        <taxon>Spirochaetia</taxon>
        <taxon>Leptospirales</taxon>
        <taxon>Leptospiraceae</taxon>
        <taxon>Leptospira</taxon>
    </lineage>
</organism>
<keyword id="KW-0028">Amino-acid biosynthesis</keyword>
<keyword id="KW-0963">Cytoplasm</keyword>
<keyword id="KW-0220">Diaminopimelate biosynthesis</keyword>
<keyword id="KW-0456">Lyase</keyword>
<keyword id="KW-0457">Lysine biosynthesis</keyword>
<keyword id="KW-0704">Schiff base</keyword>
<protein>
    <recommendedName>
        <fullName evidence="1">4-hydroxy-tetrahydrodipicolinate synthase</fullName>
        <shortName evidence="1">HTPA synthase</shortName>
        <ecNumber evidence="1">4.3.3.7</ecNumber>
    </recommendedName>
</protein>
<sequence>MIAKSGSNQESNPMFQGVYTAIITPFKNDKIDYDSYFKLLEKQIKAGVSGVVPCGTTGESPTLSHSEHAELIRETVKAVQGKIQVVAGTGSNSTKEAIELTEAACKDGVDGILSVNPYYNKPTQEGLFQHFKSIAEHSTVPVMLYNIPGRTSVNLLPETVLRLSEVKQIRSMKEATGDLGQMGKLISLVGNKMTVLSGDDNLTLPLLAIGGVGVVSVISNLFPKALVQLVESFQQGKISEAKKIHYDFIEVFALAFMETNPIPIKAAMCWFGHCGPEIRLPLTPLSQNETSSKFKKVLEGLKEKGYE</sequence>